<organism>
    <name type="scientific">Shewanella sp. (strain W3-18-1)</name>
    <dbReference type="NCBI Taxonomy" id="351745"/>
    <lineage>
        <taxon>Bacteria</taxon>
        <taxon>Pseudomonadati</taxon>
        <taxon>Pseudomonadota</taxon>
        <taxon>Gammaproteobacteria</taxon>
        <taxon>Alteromonadales</taxon>
        <taxon>Shewanellaceae</taxon>
        <taxon>Shewanella</taxon>
    </lineage>
</organism>
<comment type="function">
    <text evidence="1">Cleaves peptides in various proteins in a process that requires ATP hydrolysis. Has a chymotrypsin-like activity. Plays a major role in the degradation of misfolded proteins.</text>
</comment>
<comment type="catalytic activity">
    <reaction evidence="1">
        <text>Hydrolysis of proteins to small peptides in the presence of ATP and magnesium. alpha-casein is the usual test substrate. In the absence of ATP, only oligopeptides shorter than five residues are hydrolyzed (such as succinyl-Leu-Tyr-|-NHMec, and Leu-Tyr-Leu-|-Tyr-Trp, in which cleavage of the -Tyr-|-Leu- and -Tyr-|-Trp bonds also occurs).</text>
        <dbReference type="EC" id="3.4.21.92"/>
    </reaction>
</comment>
<comment type="subunit">
    <text evidence="1">Fourteen ClpP subunits assemble into 2 heptameric rings which stack back to back to give a disk-like structure with a central cavity, resembling the structure of eukaryotic proteasomes.</text>
</comment>
<comment type="subcellular location">
    <subcellularLocation>
        <location evidence="1">Cytoplasm</location>
    </subcellularLocation>
</comment>
<comment type="similarity">
    <text evidence="1">Belongs to the peptidase S14 family.</text>
</comment>
<feature type="chain" id="PRO_1000026131" description="ATP-dependent Clp protease proteolytic subunit">
    <location>
        <begin position="1"/>
        <end position="202"/>
    </location>
</feature>
<feature type="active site" description="Nucleophile" evidence="1">
    <location>
        <position position="106"/>
    </location>
</feature>
<feature type="active site" evidence="1">
    <location>
        <position position="131"/>
    </location>
</feature>
<gene>
    <name evidence="1" type="primary">clpP</name>
    <name type="ordered locus">Sputw3181_2611</name>
</gene>
<protein>
    <recommendedName>
        <fullName evidence="1">ATP-dependent Clp protease proteolytic subunit</fullName>
        <ecNumber evidence="1">3.4.21.92</ecNumber>
    </recommendedName>
    <alternativeName>
        <fullName evidence="1">Endopeptidase Clp</fullName>
    </alternativeName>
</protein>
<name>CLPP_SHESW</name>
<accession>A1RL89</accession>
<proteinExistence type="inferred from homology"/>
<dbReference type="EC" id="3.4.21.92" evidence="1"/>
<dbReference type="EMBL" id="CP000503">
    <property type="protein sequence ID" value="ABM25434.1"/>
    <property type="molecule type" value="Genomic_DNA"/>
</dbReference>
<dbReference type="RefSeq" id="WP_011789891.1">
    <property type="nucleotide sequence ID" value="NC_008750.1"/>
</dbReference>
<dbReference type="SMR" id="A1RL89"/>
<dbReference type="MEROPS" id="S14.001"/>
<dbReference type="GeneID" id="67443008"/>
<dbReference type="KEGG" id="shw:Sputw3181_2611"/>
<dbReference type="HOGENOM" id="CLU_058707_3_2_6"/>
<dbReference type="Proteomes" id="UP000002597">
    <property type="component" value="Chromosome"/>
</dbReference>
<dbReference type="GO" id="GO:0005737">
    <property type="term" value="C:cytoplasm"/>
    <property type="evidence" value="ECO:0007669"/>
    <property type="project" value="UniProtKB-SubCell"/>
</dbReference>
<dbReference type="GO" id="GO:0009368">
    <property type="term" value="C:endopeptidase Clp complex"/>
    <property type="evidence" value="ECO:0007669"/>
    <property type="project" value="TreeGrafter"/>
</dbReference>
<dbReference type="GO" id="GO:0004176">
    <property type="term" value="F:ATP-dependent peptidase activity"/>
    <property type="evidence" value="ECO:0007669"/>
    <property type="project" value="InterPro"/>
</dbReference>
<dbReference type="GO" id="GO:0051117">
    <property type="term" value="F:ATPase binding"/>
    <property type="evidence" value="ECO:0007669"/>
    <property type="project" value="TreeGrafter"/>
</dbReference>
<dbReference type="GO" id="GO:0004252">
    <property type="term" value="F:serine-type endopeptidase activity"/>
    <property type="evidence" value="ECO:0007669"/>
    <property type="project" value="UniProtKB-UniRule"/>
</dbReference>
<dbReference type="GO" id="GO:0006515">
    <property type="term" value="P:protein quality control for misfolded or incompletely synthesized proteins"/>
    <property type="evidence" value="ECO:0007669"/>
    <property type="project" value="TreeGrafter"/>
</dbReference>
<dbReference type="CDD" id="cd07017">
    <property type="entry name" value="S14_ClpP_2"/>
    <property type="match status" value="1"/>
</dbReference>
<dbReference type="FunFam" id="3.90.226.10:FF:000001">
    <property type="entry name" value="ATP-dependent Clp protease proteolytic subunit"/>
    <property type="match status" value="1"/>
</dbReference>
<dbReference type="Gene3D" id="3.90.226.10">
    <property type="entry name" value="2-enoyl-CoA Hydratase, Chain A, domain 1"/>
    <property type="match status" value="1"/>
</dbReference>
<dbReference type="HAMAP" id="MF_00444">
    <property type="entry name" value="ClpP"/>
    <property type="match status" value="1"/>
</dbReference>
<dbReference type="InterPro" id="IPR001907">
    <property type="entry name" value="ClpP"/>
</dbReference>
<dbReference type="InterPro" id="IPR029045">
    <property type="entry name" value="ClpP/crotonase-like_dom_sf"/>
</dbReference>
<dbReference type="InterPro" id="IPR023562">
    <property type="entry name" value="ClpP/TepA"/>
</dbReference>
<dbReference type="InterPro" id="IPR033135">
    <property type="entry name" value="ClpP_His_AS"/>
</dbReference>
<dbReference type="InterPro" id="IPR018215">
    <property type="entry name" value="ClpP_Ser_AS"/>
</dbReference>
<dbReference type="NCBIfam" id="TIGR00493">
    <property type="entry name" value="clpP"/>
    <property type="match status" value="1"/>
</dbReference>
<dbReference type="NCBIfam" id="NF001368">
    <property type="entry name" value="PRK00277.1"/>
    <property type="match status" value="1"/>
</dbReference>
<dbReference type="NCBIfam" id="NF009205">
    <property type="entry name" value="PRK12553.1"/>
    <property type="match status" value="1"/>
</dbReference>
<dbReference type="PANTHER" id="PTHR10381">
    <property type="entry name" value="ATP-DEPENDENT CLP PROTEASE PROTEOLYTIC SUBUNIT"/>
    <property type="match status" value="1"/>
</dbReference>
<dbReference type="PANTHER" id="PTHR10381:SF70">
    <property type="entry name" value="ATP-DEPENDENT CLP PROTEASE PROTEOLYTIC SUBUNIT"/>
    <property type="match status" value="1"/>
</dbReference>
<dbReference type="Pfam" id="PF00574">
    <property type="entry name" value="CLP_protease"/>
    <property type="match status" value="1"/>
</dbReference>
<dbReference type="PRINTS" id="PR00127">
    <property type="entry name" value="CLPPROTEASEP"/>
</dbReference>
<dbReference type="SUPFAM" id="SSF52096">
    <property type="entry name" value="ClpP/crotonase"/>
    <property type="match status" value="1"/>
</dbReference>
<dbReference type="PROSITE" id="PS00382">
    <property type="entry name" value="CLP_PROTEASE_HIS"/>
    <property type="match status" value="1"/>
</dbReference>
<dbReference type="PROSITE" id="PS00381">
    <property type="entry name" value="CLP_PROTEASE_SER"/>
    <property type="match status" value="1"/>
</dbReference>
<reference key="1">
    <citation type="submission" date="2006-12" db="EMBL/GenBank/DDBJ databases">
        <title>Complete sequence of Shewanella sp. W3-18-1.</title>
        <authorList>
            <consortium name="US DOE Joint Genome Institute"/>
            <person name="Copeland A."/>
            <person name="Lucas S."/>
            <person name="Lapidus A."/>
            <person name="Barry K."/>
            <person name="Detter J.C."/>
            <person name="Glavina del Rio T."/>
            <person name="Hammon N."/>
            <person name="Israni S."/>
            <person name="Dalin E."/>
            <person name="Tice H."/>
            <person name="Pitluck S."/>
            <person name="Chain P."/>
            <person name="Malfatti S."/>
            <person name="Shin M."/>
            <person name="Vergez L."/>
            <person name="Schmutz J."/>
            <person name="Larimer F."/>
            <person name="Land M."/>
            <person name="Hauser L."/>
            <person name="Kyrpides N."/>
            <person name="Lykidis A."/>
            <person name="Tiedje J."/>
            <person name="Richardson P."/>
        </authorList>
    </citation>
    <scope>NUCLEOTIDE SEQUENCE [LARGE SCALE GENOMIC DNA]</scope>
    <source>
        <strain>W3-18-1</strain>
    </source>
</reference>
<sequence length="202" mass="22197">MHNASDIQNALVPMVIEQTAKGERSYDIYSRLLKERIIFLVGQVEEHMANLIVAQLLFLESESPDKDIFLYINSPGGSVTAGMAIYDTMQFIKPNVSTVCIGQAASMGAFLLAGGEKGKRFCLPNSRVMIHQPLGGFQGQASDIAIHAQEILGIKHKLNLMLAEHTGQPLEVIERDTDRDNFMSATQAVEYGLVDSVMTKRG</sequence>
<evidence type="ECO:0000255" key="1">
    <source>
        <dbReference type="HAMAP-Rule" id="MF_00444"/>
    </source>
</evidence>
<keyword id="KW-0963">Cytoplasm</keyword>
<keyword id="KW-0378">Hydrolase</keyword>
<keyword id="KW-0645">Protease</keyword>
<keyword id="KW-0720">Serine protease</keyword>